<gene>
    <name evidence="2 3" type="primary">NUBP1</name>
</gene>
<feature type="chain" id="PRO_0000306169" description="Cytosolic Fe-S cluster assembly factor NUBP1">
    <location>
        <begin position="1"/>
        <end position="320"/>
    </location>
</feature>
<feature type="binding site" evidence="3">
    <location>
        <position position="8"/>
    </location>
    <ligand>
        <name>[4Fe-4S] cluster</name>
        <dbReference type="ChEBI" id="CHEBI:49883"/>
        <label>1</label>
    </ligand>
</feature>
<feature type="binding site" evidence="3">
    <location>
        <position position="22"/>
    </location>
    <ligand>
        <name>[4Fe-4S] cluster</name>
        <dbReference type="ChEBI" id="CHEBI:49883"/>
        <label>1</label>
    </ligand>
</feature>
<feature type="binding site" evidence="3">
    <location>
        <position position="25"/>
    </location>
    <ligand>
        <name>[4Fe-4S] cluster</name>
        <dbReference type="ChEBI" id="CHEBI:49883"/>
        <label>1</label>
    </ligand>
</feature>
<feature type="binding site" evidence="3">
    <location>
        <position position="31"/>
    </location>
    <ligand>
        <name>[4Fe-4S] cluster</name>
        <dbReference type="ChEBI" id="CHEBI:49883"/>
        <label>1</label>
    </ligand>
</feature>
<feature type="binding site" evidence="3">
    <location>
        <begin position="62"/>
        <end position="69"/>
    </location>
    <ligand>
        <name>ATP</name>
        <dbReference type="ChEBI" id="CHEBI:30616"/>
    </ligand>
</feature>
<feature type="binding site" evidence="3">
    <location>
        <position position="235"/>
    </location>
    <ligand>
        <name>[4Fe-4S] cluster</name>
        <dbReference type="ChEBI" id="CHEBI:49883"/>
        <label>2</label>
        <note>ligand shared with heterodimeric partner</note>
    </ligand>
</feature>
<feature type="binding site" evidence="3">
    <location>
        <position position="238"/>
    </location>
    <ligand>
        <name>[4Fe-4S] cluster</name>
        <dbReference type="ChEBI" id="CHEBI:49883"/>
        <label>2</label>
        <note>ligand shared with heterodimeric partner</note>
    </ligand>
</feature>
<feature type="modified residue" description="N-acetylmethionine" evidence="1">
    <location>
        <position position="1"/>
    </location>
</feature>
<dbReference type="EMBL" id="BC114137">
    <property type="protein sequence ID" value="AAI14138.1"/>
    <property type="molecule type" value="mRNA"/>
</dbReference>
<dbReference type="RefSeq" id="NP_001068763.1">
    <property type="nucleotide sequence ID" value="NM_001075295.2"/>
</dbReference>
<dbReference type="SMR" id="Q24K00"/>
<dbReference type="FunCoup" id="Q24K00">
    <property type="interactions" value="2163"/>
</dbReference>
<dbReference type="STRING" id="9913.ENSBTAP00000012576"/>
<dbReference type="PaxDb" id="9913-ENSBTAP00000012576"/>
<dbReference type="GeneID" id="507007"/>
<dbReference type="KEGG" id="bta:507007"/>
<dbReference type="CTD" id="4682"/>
<dbReference type="VEuPathDB" id="HostDB:ENSBTAG00000009560"/>
<dbReference type="eggNOG" id="KOG3022">
    <property type="taxonomic scope" value="Eukaryota"/>
</dbReference>
<dbReference type="InParanoid" id="Q24K00"/>
<dbReference type="OMA" id="VSGCPMR"/>
<dbReference type="OrthoDB" id="1741334at2759"/>
<dbReference type="Proteomes" id="UP000009136">
    <property type="component" value="Chromosome 25"/>
</dbReference>
<dbReference type="Bgee" id="ENSBTAG00000009560">
    <property type="expression patterns" value="Expressed in oocyte and 105 other cell types or tissues"/>
</dbReference>
<dbReference type="GO" id="GO:0005814">
    <property type="term" value="C:centriole"/>
    <property type="evidence" value="ECO:0007669"/>
    <property type="project" value="UniProtKB-SubCell"/>
</dbReference>
<dbReference type="GO" id="GO:0005929">
    <property type="term" value="C:cilium"/>
    <property type="evidence" value="ECO:0007669"/>
    <property type="project" value="UniProtKB-KW"/>
</dbReference>
<dbReference type="GO" id="GO:0005829">
    <property type="term" value="C:cytosol"/>
    <property type="evidence" value="ECO:0000250"/>
    <property type="project" value="UniProtKB"/>
</dbReference>
<dbReference type="GO" id="GO:0005634">
    <property type="term" value="C:nucleus"/>
    <property type="evidence" value="ECO:0007669"/>
    <property type="project" value="UniProtKB-SubCell"/>
</dbReference>
<dbReference type="GO" id="GO:0051539">
    <property type="term" value="F:4 iron, 4 sulfur cluster binding"/>
    <property type="evidence" value="ECO:0007669"/>
    <property type="project" value="UniProtKB-UniRule"/>
</dbReference>
<dbReference type="GO" id="GO:0005524">
    <property type="term" value="F:ATP binding"/>
    <property type="evidence" value="ECO:0007669"/>
    <property type="project" value="UniProtKB-KW"/>
</dbReference>
<dbReference type="GO" id="GO:0140663">
    <property type="term" value="F:ATP-dependent FeS chaperone activity"/>
    <property type="evidence" value="ECO:0007669"/>
    <property type="project" value="InterPro"/>
</dbReference>
<dbReference type="GO" id="GO:0051536">
    <property type="term" value="F:iron-sulfur cluster binding"/>
    <property type="evidence" value="ECO:0000250"/>
    <property type="project" value="UniProtKB"/>
</dbReference>
<dbReference type="GO" id="GO:0046872">
    <property type="term" value="F:metal ion binding"/>
    <property type="evidence" value="ECO:0007669"/>
    <property type="project" value="UniProtKB-KW"/>
</dbReference>
<dbReference type="GO" id="GO:0030030">
    <property type="term" value="P:cell projection organization"/>
    <property type="evidence" value="ECO:0007669"/>
    <property type="project" value="UniProtKB-KW"/>
</dbReference>
<dbReference type="GO" id="GO:0016226">
    <property type="term" value="P:iron-sulfur cluster assembly"/>
    <property type="evidence" value="ECO:0000250"/>
    <property type="project" value="UniProtKB"/>
</dbReference>
<dbReference type="CDD" id="cd02037">
    <property type="entry name" value="Mrp_NBP35"/>
    <property type="match status" value="1"/>
</dbReference>
<dbReference type="FunFam" id="3.40.50.300:FF:000427">
    <property type="entry name" value="Cytosolic Fe-S cluster assembly factor NUBP1"/>
    <property type="match status" value="1"/>
</dbReference>
<dbReference type="Gene3D" id="3.40.50.300">
    <property type="entry name" value="P-loop containing nucleotide triphosphate hydrolases"/>
    <property type="match status" value="1"/>
</dbReference>
<dbReference type="HAMAP" id="MF_02040">
    <property type="entry name" value="Mrp_NBP35"/>
    <property type="match status" value="1"/>
</dbReference>
<dbReference type="HAMAP" id="MF_03038">
    <property type="entry name" value="NUBP1"/>
    <property type="match status" value="1"/>
</dbReference>
<dbReference type="InterPro" id="IPR000808">
    <property type="entry name" value="Mrp-like_CS"/>
</dbReference>
<dbReference type="InterPro" id="IPR019591">
    <property type="entry name" value="Mrp/NBP35_ATP-bd"/>
</dbReference>
<dbReference type="InterPro" id="IPR028601">
    <property type="entry name" value="NUBP1/Nbp35"/>
</dbReference>
<dbReference type="InterPro" id="IPR027417">
    <property type="entry name" value="P-loop_NTPase"/>
</dbReference>
<dbReference type="InterPro" id="IPR033756">
    <property type="entry name" value="YlxH/NBP35"/>
</dbReference>
<dbReference type="PANTHER" id="PTHR23264:SF35">
    <property type="entry name" value="CYTOSOLIC FE-S CLUSTER ASSEMBLY FACTOR NUBP1"/>
    <property type="match status" value="1"/>
</dbReference>
<dbReference type="PANTHER" id="PTHR23264">
    <property type="entry name" value="NUCLEOTIDE-BINDING PROTEIN NBP35 YEAST -RELATED"/>
    <property type="match status" value="1"/>
</dbReference>
<dbReference type="Pfam" id="PF10609">
    <property type="entry name" value="ParA"/>
    <property type="match status" value="1"/>
</dbReference>
<dbReference type="SUPFAM" id="SSF52540">
    <property type="entry name" value="P-loop containing nucleoside triphosphate hydrolases"/>
    <property type="match status" value="1"/>
</dbReference>
<dbReference type="PROSITE" id="PS01215">
    <property type="entry name" value="MRP"/>
    <property type="match status" value="1"/>
</dbReference>
<comment type="function">
    <text evidence="2 3">Component of the cytosolic iron-sulfur (Fe/S) protein assembly (CIA) machinery. Required for maturation of extramitochondrial Fe-S proteins. The NUBP1-NUBP2 heterotetramer forms a Fe-S scaffold complex, mediating the de novo assembly of an Fe-S cluster and its transfer to target apoproteins. Implicated in the regulation of centrosome duplication. Negatively regulates cilium formation and structure.</text>
</comment>
<comment type="cofactor">
    <cofactor evidence="3">
        <name>[4Fe-4S] cluster</name>
        <dbReference type="ChEBI" id="CHEBI:49883"/>
    </cofactor>
    <text evidence="3">Binds 4 [4Fe-4S] clusters per heterotetramer. Contains two stable clusters in the N-termini of NUBP1 and two labile, bridging clusters between subunits of the NUBP1-NUBP2 heterotetramer.</text>
</comment>
<comment type="subunit">
    <text evidence="2 3">Heterotetramer of 2 NUBP1 and 2 NUBP2 chains. Interacts with KIFC1. Interacts with the BBS/CCT complex subunit CCT1.</text>
</comment>
<comment type="subcellular location">
    <subcellularLocation>
        <location evidence="3">Cytoplasm</location>
    </subcellularLocation>
    <subcellularLocation>
        <location evidence="2">Nucleus</location>
    </subcellularLocation>
    <subcellularLocation>
        <location evidence="2">Cell projection</location>
    </subcellularLocation>
    <subcellularLocation>
        <location evidence="2">Cytoplasm</location>
        <location evidence="2">Cytoskeleton</location>
        <location evidence="2">Cilium axoneme</location>
    </subcellularLocation>
    <subcellularLocation>
        <location evidence="2">Cytoplasm</location>
        <location evidence="2">Cytoskeleton</location>
        <location evidence="2">Cilium basal body</location>
    </subcellularLocation>
    <subcellularLocation>
        <location evidence="2">Cytoplasm</location>
        <location evidence="2">Cytoskeleton</location>
        <location evidence="2">Microtubule organizing center</location>
    </subcellularLocation>
    <subcellularLocation>
        <location evidence="2">Cytoplasm</location>
        <location evidence="2">Cytoskeleton</location>
        <location evidence="2">Microtubule organizing center</location>
        <location evidence="2">Centrosome</location>
        <location evidence="2">Centriole</location>
    </subcellularLocation>
    <text evidence="2">Enriched in centrioles of microtubule asters during prophase, prometaphase and telophase stages of mitosis. Localized at centrioles and in the nucleus at interphase. Colocalizes with nubp-2 at prometaphase. Specifically localizes to the axenome of motile cilia as opposed to primary non-motile cilia. Localization is independent of NUBP2 and KIFC1.</text>
</comment>
<comment type="similarity">
    <text evidence="3">Belongs to the Mrp/NBP35 ATP-binding proteins family. NUBP1/NBP35 subfamily.</text>
</comment>
<protein>
    <recommendedName>
        <fullName evidence="3">Cytosolic Fe-S cluster assembly factor NUBP1</fullName>
    </recommendedName>
    <alternativeName>
        <fullName evidence="3">Nucleotide-binding protein 1</fullName>
        <shortName evidence="3">NBP 1</shortName>
    </alternativeName>
</protein>
<proteinExistence type="evidence at transcript level"/>
<organism>
    <name type="scientific">Bos taurus</name>
    <name type="common">Bovine</name>
    <dbReference type="NCBI Taxonomy" id="9913"/>
    <lineage>
        <taxon>Eukaryota</taxon>
        <taxon>Metazoa</taxon>
        <taxon>Chordata</taxon>
        <taxon>Craniata</taxon>
        <taxon>Vertebrata</taxon>
        <taxon>Euteleostomi</taxon>
        <taxon>Mammalia</taxon>
        <taxon>Eutheria</taxon>
        <taxon>Laurasiatheria</taxon>
        <taxon>Artiodactyla</taxon>
        <taxon>Ruminantia</taxon>
        <taxon>Pecora</taxon>
        <taxon>Bovidae</taxon>
        <taxon>Bovinae</taxon>
        <taxon>Bos</taxon>
    </lineage>
</organism>
<accession>Q24K00</accession>
<reference evidence="4" key="1">
    <citation type="submission" date="2006-02" db="EMBL/GenBank/DDBJ databases">
        <authorList>
            <consortium name="NIH - Mammalian Gene Collection (MGC) project"/>
        </authorList>
    </citation>
    <scope>NUCLEOTIDE SEQUENCE [LARGE SCALE MRNA]</scope>
    <source>
        <strain evidence="4">Hereford</strain>
        <tissue evidence="4">Heart ventricle</tissue>
    </source>
</reference>
<evidence type="ECO:0000250" key="1">
    <source>
        <dbReference type="UniProtKB" id="P53384"/>
    </source>
</evidence>
<evidence type="ECO:0000250" key="2">
    <source>
        <dbReference type="UniProtKB" id="Q9R060"/>
    </source>
</evidence>
<evidence type="ECO:0000255" key="3">
    <source>
        <dbReference type="HAMAP-Rule" id="MF_03038"/>
    </source>
</evidence>
<evidence type="ECO:0000312" key="4">
    <source>
        <dbReference type="EMBL" id="AAI14138.1"/>
    </source>
</evidence>
<name>NUBP1_BOVIN</name>
<keyword id="KW-0004">4Fe-4S</keyword>
<keyword id="KW-0007">Acetylation</keyword>
<keyword id="KW-0067">ATP-binding</keyword>
<keyword id="KW-0966">Cell projection</keyword>
<keyword id="KW-0969">Cilium</keyword>
<keyword id="KW-0970">Cilium biogenesis/degradation</keyword>
<keyword id="KW-0963">Cytoplasm</keyword>
<keyword id="KW-0206">Cytoskeleton</keyword>
<keyword id="KW-0408">Iron</keyword>
<keyword id="KW-0411">Iron-sulfur</keyword>
<keyword id="KW-0479">Metal-binding</keyword>
<keyword id="KW-0547">Nucleotide-binding</keyword>
<keyword id="KW-0539">Nucleus</keyword>
<keyword id="KW-1185">Reference proteome</keyword>
<sequence length="320" mass="34182">MEEVPHDCPGADSAQAGRGASCQGCPNQRLCASGAGAAADPAIEEIKEKMKTVKHKILVLSGKGGVGKSTFSAHLAHGLAEDENTQVALLDIDICGPSIPKIMGLEGEQVHQSGSGWSPVFLEDNLGVMSVGFLLSSPDDAVIWRGPKKNGMIKQFLRDVDWGEVDYLIVDTPPGTSDEHLSVVQYLTAAHIDGAVIITTPQEVSLQDVRKEISFCHKVKLPIIGVVENMSGFICPKCQKESQIFPPTTGGAEAMCQDLKIPLLGKVPLDPRIGKSCDKGQSFLVEAPDSPATVAYRSIIQRIQEFCSQRLPEGENLVGS</sequence>